<evidence type="ECO:0000255" key="1">
    <source>
        <dbReference type="HAMAP-Rule" id="MF_01346"/>
    </source>
</evidence>
<dbReference type="EC" id="7.1.2.2" evidence="1"/>
<dbReference type="EMBL" id="AE005174">
    <property type="protein sequence ID" value="AAG58937.1"/>
    <property type="molecule type" value="Genomic_DNA"/>
</dbReference>
<dbReference type="EMBL" id="BA000007">
    <property type="protein sequence ID" value="BAB38099.1"/>
    <property type="molecule type" value="Genomic_DNA"/>
</dbReference>
<dbReference type="PIR" id="D91213">
    <property type="entry name" value="D91213"/>
</dbReference>
<dbReference type="PIR" id="E86059">
    <property type="entry name" value="E86059"/>
</dbReference>
<dbReference type="RefSeq" id="NP_312703.1">
    <property type="nucleotide sequence ID" value="NC_002695.1"/>
</dbReference>
<dbReference type="RefSeq" id="WP_001176745.1">
    <property type="nucleotide sequence ID" value="NZ_VOAI01000011.1"/>
</dbReference>
<dbReference type="SMR" id="P0ABB2"/>
<dbReference type="STRING" id="155864.Z5232"/>
<dbReference type="GeneID" id="915345"/>
<dbReference type="GeneID" id="93778233"/>
<dbReference type="KEGG" id="ece:Z5232"/>
<dbReference type="KEGG" id="ecs:ECs_4676"/>
<dbReference type="PATRIC" id="fig|386585.9.peg.4881"/>
<dbReference type="eggNOG" id="COG0056">
    <property type="taxonomic scope" value="Bacteria"/>
</dbReference>
<dbReference type="HOGENOM" id="CLU_010091_2_1_6"/>
<dbReference type="OMA" id="INQRDNW"/>
<dbReference type="EvolutionaryTrace" id="P0ABB2"/>
<dbReference type="Proteomes" id="UP000000558">
    <property type="component" value="Chromosome"/>
</dbReference>
<dbReference type="Proteomes" id="UP000002519">
    <property type="component" value="Chromosome"/>
</dbReference>
<dbReference type="GO" id="GO:0005886">
    <property type="term" value="C:plasma membrane"/>
    <property type="evidence" value="ECO:0007669"/>
    <property type="project" value="UniProtKB-SubCell"/>
</dbReference>
<dbReference type="GO" id="GO:0045259">
    <property type="term" value="C:proton-transporting ATP synthase complex"/>
    <property type="evidence" value="ECO:0007669"/>
    <property type="project" value="UniProtKB-KW"/>
</dbReference>
<dbReference type="GO" id="GO:0043531">
    <property type="term" value="F:ADP binding"/>
    <property type="evidence" value="ECO:0007669"/>
    <property type="project" value="TreeGrafter"/>
</dbReference>
<dbReference type="GO" id="GO:0005524">
    <property type="term" value="F:ATP binding"/>
    <property type="evidence" value="ECO:0007669"/>
    <property type="project" value="UniProtKB-UniRule"/>
</dbReference>
<dbReference type="GO" id="GO:0046933">
    <property type="term" value="F:proton-transporting ATP synthase activity, rotational mechanism"/>
    <property type="evidence" value="ECO:0007669"/>
    <property type="project" value="UniProtKB-UniRule"/>
</dbReference>
<dbReference type="CDD" id="cd18113">
    <property type="entry name" value="ATP-synt_F1_alpha_C"/>
    <property type="match status" value="1"/>
</dbReference>
<dbReference type="CDD" id="cd18116">
    <property type="entry name" value="ATP-synt_F1_alpha_N"/>
    <property type="match status" value="1"/>
</dbReference>
<dbReference type="CDD" id="cd01132">
    <property type="entry name" value="F1-ATPase_alpha_CD"/>
    <property type="match status" value="1"/>
</dbReference>
<dbReference type="FunFam" id="1.20.150.20:FF:000001">
    <property type="entry name" value="ATP synthase subunit alpha"/>
    <property type="match status" value="1"/>
</dbReference>
<dbReference type="FunFam" id="2.40.30.20:FF:000001">
    <property type="entry name" value="ATP synthase subunit alpha"/>
    <property type="match status" value="1"/>
</dbReference>
<dbReference type="FunFam" id="3.40.50.300:FF:000002">
    <property type="entry name" value="ATP synthase subunit alpha"/>
    <property type="match status" value="1"/>
</dbReference>
<dbReference type="Gene3D" id="2.40.30.20">
    <property type="match status" value="1"/>
</dbReference>
<dbReference type="Gene3D" id="1.20.150.20">
    <property type="entry name" value="ATP synthase alpha/beta chain, C-terminal domain"/>
    <property type="match status" value="1"/>
</dbReference>
<dbReference type="Gene3D" id="3.40.50.300">
    <property type="entry name" value="P-loop containing nucleotide triphosphate hydrolases"/>
    <property type="match status" value="1"/>
</dbReference>
<dbReference type="HAMAP" id="MF_01346">
    <property type="entry name" value="ATP_synth_alpha_bact"/>
    <property type="match status" value="1"/>
</dbReference>
<dbReference type="InterPro" id="IPR023366">
    <property type="entry name" value="ATP_synth_asu-like_sf"/>
</dbReference>
<dbReference type="InterPro" id="IPR000793">
    <property type="entry name" value="ATP_synth_asu_C"/>
</dbReference>
<dbReference type="InterPro" id="IPR038376">
    <property type="entry name" value="ATP_synth_asu_C_sf"/>
</dbReference>
<dbReference type="InterPro" id="IPR033732">
    <property type="entry name" value="ATP_synth_F1_a_nt-bd_dom"/>
</dbReference>
<dbReference type="InterPro" id="IPR005294">
    <property type="entry name" value="ATP_synth_F1_asu"/>
</dbReference>
<dbReference type="InterPro" id="IPR020003">
    <property type="entry name" value="ATPase_a/bsu_AS"/>
</dbReference>
<dbReference type="InterPro" id="IPR004100">
    <property type="entry name" value="ATPase_F1/V1/A1_a/bsu_N"/>
</dbReference>
<dbReference type="InterPro" id="IPR036121">
    <property type="entry name" value="ATPase_F1/V1/A1_a/bsu_N_sf"/>
</dbReference>
<dbReference type="InterPro" id="IPR000194">
    <property type="entry name" value="ATPase_F1/V1/A1_a/bsu_nucl-bd"/>
</dbReference>
<dbReference type="InterPro" id="IPR027417">
    <property type="entry name" value="P-loop_NTPase"/>
</dbReference>
<dbReference type="NCBIfam" id="TIGR00962">
    <property type="entry name" value="atpA"/>
    <property type="match status" value="1"/>
</dbReference>
<dbReference type="NCBIfam" id="NF009884">
    <property type="entry name" value="PRK13343.1"/>
    <property type="match status" value="1"/>
</dbReference>
<dbReference type="PANTHER" id="PTHR48082">
    <property type="entry name" value="ATP SYNTHASE SUBUNIT ALPHA, MITOCHONDRIAL"/>
    <property type="match status" value="1"/>
</dbReference>
<dbReference type="PANTHER" id="PTHR48082:SF2">
    <property type="entry name" value="ATP SYNTHASE SUBUNIT ALPHA, MITOCHONDRIAL"/>
    <property type="match status" value="1"/>
</dbReference>
<dbReference type="Pfam" id="PF00006">
    <property type="entry name" value="ATP-synt_ab"/>
    <property type="match status" value="1"/>
</dbReference>
<dbReference type="Pfam" id="PF00306">
    <property type="entry name" value="ATP-synt_ab_C"/>
    <property type="match status" value="1"/>
</dbReference>
<dbReference type="Pfam" id="PF02874">
    <property type="entry name" value="ATP-synt_ab_N"/>
    <property type="match status" value="1"/>
</dbReference>
<dbReference type="SUPFAM" id="SSF47917">
    <property type="entry name" value="C-terminal domain of alpha and beta subunits of F1 ATP synthase"/>
    <property type="match status" value="1"/>
</dbReference>
<dbReference type="SUPFAM" id="SSF50615">
    <property type="entry name" value="N-terminal domain of alpha and beta subunits of F1 ATP synthase"/>
    <property type="match status" value="1"/>
</dbReference>
<dbReference type="SUPFAM" id="SSF52540">
    <property type="entry name" value="P-loop containing nucleoside triphosphate hydrolases"/>
    <property type="match status" value="1"/>
</dbReference>
<dbReference type="PROSITE" id="PS00152">
    <property type="entry name" value="ATPASE_ALPHA_BETA"/>
    <property type="match status" value="1"/>
</dbReference>
<name>ATPA_ECO57</name>
<accession>P0ABB2</accession>
<accession>P00822</accession>
<accession>Q47249</accession>
<proteinExistence type="inferred from homology"/>
<sequence length="513" mass="55222">MQLNSTEISELIKQRIAQFNVVSEAHNEGTIVSVSDGVIRIHGLADCMQGEMISLPGNRYAIALNLERDSVGAVVMGPYADLAEGMKVKCTGRILEVPVGRGLLGRVVNTLGAPIDGKGPLDHDGFSAVEAIAPGVIERQSVDQPVQTGYKAVDSMIPIGRGQRELIIGDRQTGKTALAIDAIINQRDSGIKCIYVAIGQKASTISNVVRKLEEHGALANTIVVVATASESAALQYLAPYAGCAMGEYFRDRGEDALIIYDDLSKQAVAYRQISLLLRRPPGREAFPGDVFYLHSRLLERAARVNAEYVEAFTKGEVKGKTGSLTALPIIETQAGDVSAFVPTNVISITDGQIFLETNLFNAGIRPAVNPGISVSRVGGAAQTKIMKKLSGGIRTALAQYRELAAFSQFASDLDDATRKQLDHGQKVTELLKQKQYAPMSVAQQSLVLFAAERGYLADVELSKIGSFEAALLAYVDRDHAPLMQEINQTGGYNDEIEGKLKGILDSFKATQSW</sequence>
<organism>
    <name type="scientific">Escherichia coli O157:H7</name>
    <dbReference type="NCBI Taxonomy" id="83334"/>
    <lineage>
        <taxon>Bacteria</taxon>
        <taxon>Pseudomonadati</taxon>
        <taxon>Pseudomonadota</taxon>
        <taxon>Gammaproteobacteria</taxon>
        <taxon>Enterobacterales</taxon>
        <taxon>Enterobacteriaceae</taxon>
        <taxon>Escherichia</taxon>
    </lineage>
</organism>
<protein>
    <recommendedName>
        <fullName evidence="1">ATP synthase subunit alpha</fullName>
        <ecNumber evidence="1">7.1.2.2</ecNumber>
    </recommendedName>
    <alternativeName>
        <fullName evidence="1">ATP synthase F1 sector subunit alpha</fullName>
    </alternativeName>
    <alternativeName>
        <fullName evidence="1">F-ATPase subunit alpha</fullName>
    </alternativeName>
</protein>
<keyword id="KW-0066">ATP synthesis</keyword>
<keyword id="KW-0067">ATP-binding</keyword>
<keyword id="KW-0997">Cell inner membrane</keyword>
<keyword id="KW-1003">Cell membrane</keyword>
<keyword id="KW-0139">CF(1)</keyword>
<keyword id="KW-0375">Hydrogen ion transport</keyword>
<keyword id="KW-0406">Ion transport</keyword>
<keyword id="KW-0472">Membrane</keyword>
<keyword id="KW-0547">Nucleotide-binding</keyword>
<keyword id="KW-1185">Reference proteome</keyword>
<keyword id="KW-1278">Translocase</keyword>
<keyword id="KW-0813">Transport</keyword>
<gene>
    <name evidence="1" type="primary">atpA</name>
    <name type="ordered locus">Z5232</name>
    <name type="ordered locus">ECs4676</name>
</gene>
<comment type="function">
    <text evidence="1">Produces ATP from ADP in the presence of a proton gradient across the membrane. The alpha chain is a regulatory subunit.</text>
</comment>
<comment type="catalytic activity">
    <reaction evidence="1">
        <text>ATP + H2O + 4 H(+)(in) = ADP + phosphate + 5 H(+)(out)</text>
        <dbReference type="Rhea" id="RHEA:57720"/>
        <dbReference type="ChEBI" id="CHEBI:15377"/>
        <dbReference type="ChEBI" id="CHEBI:15378"/>
        <dbReference type="ChEBI" id="CHEBI:30616"/>
        <dbReference type="ChEBI" id="CHEBI:43474"/>
        <dbReference type="ChEBI" id="CHEBI:456216"/>
        <dbReference type="EC" id="7.1.2.2"/>
    </reaction>
</comment>
<comment type="subunit">
    <text evidence="1">F-type ATPases have 2 components, CF(1) - the catalytic core - and CF(0) - the membrane proton channel. CF(1) has five subunits: alpha(3), beta(3), gamma(1), delta(1), epsilon(1). CF(0) has three main subunits: a(1), b(2) and c(9-12). The alpha and beta chains form an alternating ring which encloses part of the gamma chain. CF(1) is attached to CF(0) by a central stalk formed by the gamma and epsilon chains, while a peripheral stalk is formed by the delta and b chains.</text>
</comment>
<comment type="subcellular location">
    <subcellularLocation>
        <location evidence="1">Cell inner membrane</location>
        <topology evidence="1">Peripheral membrane protein</topology>
    </subcellularLocation>
</comment>
<comment type="similarity">
    <text evidence="1">Belongs to the ATPase alpha/beta chains family.</text>
</comment>
<reference key="1">
    <citation type="journal article" date="2001" name="Nature">
        <title>Genome sequence of enterohaemorrhagic Escherichia coli O157:H7.</title>
        <authorList>
            <person name="Perna N.T."/>
            <person name="Plunkett G. III"/>
            <person name="Burland V."/>
            <person name="Mau B."/>
            <person name="Glasner J.D."/>
            <person name="Rose D.J."/>
            <person name="Mayhew G.F."/>
            <person name="Evans P.S."/>
            <person name="Gregor J."/>
            <person name="Kirkpatrick H.A."/>
            <person name="Posfai G."/>
            <person name="Hackett J."/>
            <person name="Klink S."/>
            <person name="Boutin A."/>
            <person name="Shao Y."/>
            <person name="Miller L."/>
            <person name="Grotbeck E.J."/>
            <person name="Davis N.W."/>
            <person name="Lim A."/>
            <person name="Dimalanta E.T."/>
            <person name="Potamousis K."/>
            <person name="Apodaca J."/>
            <person name="Anantharaman T.S."/>
            <person name="Lin J."/>
            <person name="Yen G."/>
            <person name="Schwartz D.C."/>
            <person name="Welch R.A."/>
            <person name="Blattner F.R."/>
        </authorList>
    </citation>
    <scope>NUCLEOTIDE SEQUENCE [LARGE SCALE GENOMIC DNA]</scope>
    <source>
        <strain>O157:H7 / EDL933 / ATCC 700927 / EHEC</strain>
    </source>
</reference>
<reference key="2">
    <citation type="journal article" date="2001" name="DNA Res.">
        <title>Complete genome sequence of enterohemorrhagic Escherichia coli O157:H7 and genomic comparison with a laboratory strain K-12.</title>
        <authorList>
            <person name="Hayashi T."/>
            <person name="Makino K."/>
            <person name="Ohnishi M."/>
            <person name="Kurokawa K."/>
            <person name="Ishii K."/>
            <person name="Yokoyama K."/>
            <person name="Han C.-G."/>
            <person name="Ohtsubo E."/>
            <person name="Nakayama K."/>
            <person name="Murata T."/>
            <person name="Tanaka M."/>
            <person name="Tobe T."/>
            <person name="Iida T."/>
            <person name="Takami H."/>
            <person name="Honda T."/>
            <person name="Sasakawa C."/>
            <person name="Ogasawara N."/>
            <person name="Yasunaga T."/>
            <person name="Kuhara S."/>
            <person name="Shiba T."/>
            <person name="Hattori M."/>
            <person name="Shinagawa H."/>
        </authorList>
    </citation>
    <scope>NUCLEOTIDE SEQUENCE [LARGE SCALE GENOMIC DNA]</scope>
    <source>
        <strain>O157:H7 / Sakai / RIMD 0509952 / EHEC</strain>
    </source>
</reference>
<feature type="chain" id="PRO_0000144326" description="ATP synthase subunit alpha">
    <location>
        <begin position="1"/>
        <end position="513"/>
    </location>
</feature>
<feature type="binding site" evidence="1">
    <location>
        <begin position="169"/>
        <end position="176"/>
    </location>
    <ligand>
        <name>ATP</name>
        <dbReference type="ChEBI" id="CHEBI:30616"/>
    </ligand>
</feature>
<feature type="site" description="Required for activity" evidence="1">
    <location>
        <position position="373"/>
    </location>
</feature>